<feature type="chain" id="PRO_0000377956" description="Uncharacterized protein 062L">
    <location>
        <begin position="1"/>
        <end position="232"/>
    </location>
</feature>
<keyword id="KW-1185">Reference proteome</keyword>
<reference key="1">
    <citation type="journal article" date="2006" name="J. Virol.">
        <title>Genome of invertebrate iridescent virus type 3 (mosquito iridescent virus).</title>
        <authorList>
            <person name="Delhon G."/>
            <person name="Tulman E.R."/>
            <person name="Afonso C.L."/>
            <person name="Lu Z."/>
            <person name="Becnel J.J."/>
            <person name="Moser B.A."/>
            <person name="Kutish G.F."/>
            <person name="Rock D.L."/>
        </authorList>
    </citation>
    <scope>NUCLEOTIDE SEQUENCE [LARGE SCALE GENOMIC DNA]</scope>
</reference>
<accession>Q196Z8</accession>
<proteinExistence type="predicted"/>
<gene>
    <name type="ORF">IIV3-062L</name>
</gene>
<name>062L_IIV3</name>
<organismHost>
    <name type="scientific">Aedes vexans</name>
    <name type="common">Inland floodwater mosquito</name>
    <name type="synonym">Culex vexans</name>
    <dbReference type="NCBI Taxonomy" id="7163"/>
</organismHost>
<organismHost>
    <name type="scientific">Culex territans</name>
    <dbReference type="NCBI Taxonomy" id="42431"/>
</organismHost>
<organismHost>
    <name type="scientific">Culiseta annulata</name>
    <dbReference type="NCBI Taxonomy" id="332058"/>
</organismHost>
<organismHost>
    <name type="scientific">Ochlerotatus sollicitans</name>
    <name type="common">eastern saltmarsh mosquito</name>
    <dbReference type="NCBI Taxonomy" id="310513"/>
</organismHost>
<organismHost>
    <name type="scientific">Ochlerotatus taeniorhynchus</name>
    <name type="common">Black salt marsh mosquito</name>
    <name type="synonym">Aedes taeniorhynchus</name>
    <dbReference type="NCBI Taxonomy" id="329105"/>
</organismHost>
<organismHost>
    <name type="scientific">Psorophora ferox</name>
    <dbReference type="NCBI Taxonomy" id="7183"/>
</organismHost>
<sequence>MNPEGENELQVYLRDGDLRVMALGLRHGLRRGLRRGLRRGLRRTGDLRDGDLRLDGDLRDGDLDLLDGDLRDGDLRLDGDLDLLEGDLRDGDLDLLDGDLHRDGDVDRLEGDLRDGDLRLDGDFLVLPHTTAWVFLPNSFNFLEVQTLFAPFSYWLHINGIVFINSKILFIKSPQLPSYFAMALRQCKSSWLGHTSPANRFCIVVQINDQLGLKNSINSRRSALWSGGTASC</sequence>
<dbReference type="EMBL" id="DQ643392">
    <property type="protein sequence ID" value="ABF82092.1"/>
    <property type="molecule type" value="Genomic_DNA"/>
</dbReference>
<dbReference type="RefSeq" id="YP_654634.1">
    <property type="nucleotide sequence ID" value="NC_008187.1"/>
</dbReference>
<dbReference type="KEGG" id="vg:4156312"/>
<dbReference type="Proteomes" id="UP000001358">
    <property type="component" value="Genome"/>
</dbReference>
<protein>
    <recommendedName>
        <fullName>Uncharacterized protein 062L</fullName>
    </recommendedName>
</protein>
<organism>
    <name type="scientific">Invertebrate iridescent virus 3</name>
    <name type="common">IIV-3</name>
    <name type="synonym">Mosquito iridescent virus</name>
    <dbReference type="NCBI Taxonomy" id="345201"/>
    <lineage>
        <taxon>Viruses</taxon>
        <taxon>Varidnaviria</taxon>
        <taxon>Bamfordvirae</taxon>
        <taxon>Nucleocytoviricota</taxon>
        <taxon>Megaviricetes</taxon>
        <taxon>Pimascovirales</taxon>
        <taxon>Iridoviridae</taxon>
        <taxon>Betairidovirinae</taxon>
        <taxon>Chloriridovirus</taxon>
    </lineage>
</organism>